<accession>P80759</accession>
<reference evidence="3" key="1">
    <citation type="journal article" date="1997" name="J. Biol. Chem.">
        <title>Differential extraction and protein sequencing reveals major differences in patterns of primary cell wall proteins from plants.</title>
        <authorList>
            <person name="Robertson D."/>
            <person name="Mitchell G.P."/>
            <person name="Gilroy J.S."/>
            <person name="Gerrish C."/>
            <person name="Bolwell G.P."/>
            <person name="Slabas A.R."/>
        </authorList>
    </citation>
    <scope>PROTEIN SEQUENCE</scope>
    <scope>SUBCELLULAR LOCATION</scope>
</reference>
<sequence>ATNPSGQ</sequence>
<comment type="subcellular location">
    <subcellularLocation>
        <location evidence="1">Secreted</location>
        <location evidence="1">Cell wall</location>
    </subcellularLocation>
</comment>
<protein>
    <recommendedName>
        <fullName>30 kDa cell wall protein</fullName>
    </recommendedName>
</protein>
<dbReference type="GO" id="GO:0005576">
    <property type="term" value="C:extracellular region"/>
    <property type="evidence" value="ECO:0007669"/>
    <property type="project" value="UniProtKB-KW"/>
</dbReference>
<organism>
    <name type="scientific">Daucus carota</name>
    <name type="common">Wild carrot</name>
    <dbReference type="NCBI Taxonomy" id="4039"/>
    <lineage>
        <taxon>Eukaryota</taxon>
        <taxon>Viridiplantae</taxon>
        <taxon>Streptophyta</taxon>
        <taxon>Embryophyta</taxon>
        <taxon>Tracheophyta</taxon>
        <taxon>Spermatophyta</taxon>
        <taxon>Magnoliopsida</taxon>
        <taxon>eudicotyledons</taxon>
        <taxon>Gunneridae</taxon>
        <taxon>Pentapetalae</taxon>
        <taxon>asterids</taxon>
        <taxon>campanulids</taxon>
        <taxon>Apiales</taxon>
        <taxon>Apiaceae</taxon>
        <taxon>Apioideae</taxon>
        <taxon>Scandiceae</taxon>
        <taxon>Daucinae</taxon>
        <taxon>Daucus</taxon>
        <taxon>Daucus sect. Daucus</taxon>
    </lineage>
</organism>
<proteinExistence type="evidence at protein level"/>
<name>CWP09_DAUCA</name>
<evidence type="ECO:0000269" key="1">
    <source>
    </source>
</evidence>
<evidence type="ECO:0000303" key="2">
    <source>
    </source>
</evidence>
<evidence type="ECO:0000305" key="3"/>
<feature type="chain" id="PRO_0000079654" description="30 kDa cell wall protein">
    <location>
        <begin position="1"/>
        <end position="7" status="greater than"/>
    </location>
</feature>
<feature type="non-terminal residue" evidence="2">
    <location>
        <position position="7"/>
    </location>
</feature>
<keyword id="KW-0134">Cell wall</keyword>
<keyword id="KW-0903">Direct protein sequencing</keyword>
<keyword id="KW-0964">Secreted</keyword>